<comment type="similarity">
    <text evidence="5">Belongs to the cysteine synthase/cystathionine beta-synthase family. Highly divergent.</text>
</comment>
<dbReference type="EMBL" id="Z70683">
    <property type="protein sequence ID" value="CAA94589.1"/>
    <property type="molecule type" value="Genomic_DNA"/>
</dbReference>
<dbReference type="PIR" id="T20819">
    <property type="entry name" value="T20819"/>
</dbReference>
<dbReference type="RefSeq" id="NP_501928.1">
    <property type="nucleotide sequence ID" value="NM_069527.9"/>
</dbReference>
<dbReference type="SMR" id="Q19374"/>
<dbReference type="BioGRID" id="43039">
    <property type="interactions" value="6"/>
</dbReference>
<dbReference type="DIP" id="DIP-26187N"/>
<dbReference type="FunCoup" id="Q19374">
    <property type="interactions" value="8"/>
</dbReference>
<dbReference type="STRING" id="6239.F13B12.4a.2"/>
<dbReference type="iPTMnet" id="Q19374"/>
<dbReference type="PaxDb" id="6239-F13B12.4.1"/>
<dbReference type="PeptideAtlas" id="Q19374"/>
<dbReference type="EnsemblMetazoa" id="F13B12.4a.1">
    <property type="protein sequence ID" value="F13B12.4a.1"/>
    <property type="gene ID" value="WBGene00008732"/>
</dbReference>
<dbReference type="EnsemblMetazoa" id="F13B12.4a.2">
    <property type="protein sequence ID" value="F13B12.4a.2"/>
    <property type="gene ID" value="WBGene00008732"/>
</dbReference>
<dbReference type="GeneID" id="177937"/>
<dbReference type="KEGG" id="cel:CELE_F13B12.4"/>
<dbReference type="UCSC" id="F13B12.4.1">
    <property type="organism name" value="c. elegans"/>
</dbReference>
<dbReference type="AGR" id="WB:WBGene00008732"/>
<dbReference type="CTD" id="177937"/>
<dbReference type="WormBase" id="F13B12.4a">
    <property type="protein sequence ID" value="CE05602"/>
    <property type="gene ID" value="WBGene00008732"/>
</dbReference>
<dbReference type="eggNOG" id="KOG1252">
    <property type="taxonomic scope" value="Eukaryota"/>
</dbReference>
<dbReference type="GeneTree" id="ENSGT00970000196249"/>
<dbReference type="HOGENOM" id="CLU_046285_1_0_1"/>
<dbReference type="InParanoid" id="Q19374"/>
<dbReference type="OMA" id="ARYVHYM"/>
<dbReference type="OrthoDB" id="10259545at2759"/>
<dbReference type="PhylomeDB" id="Q19374"/>
<dbReference type="PRO" id="PR:Q19374"/>
<dbReference type="Proteomes" id="UP000001940">
    <property type="component" value="Chromosome IV"/>
</dbReference>
<dbReference type="Bgee" id="WBGene00008732">
    <property type="expression patterns" value="Expressed in pharyngeal muscle cell (C elegans) and 3 other cell types or tissues"/>
</dbReference>
<dbReference type="GO" id="GO:0005737">
    <property type="term" value="C:cytoplasm"/>
    <property type="evidence" value="ECO:0000318"/>
    <property type="project" value="GO_Central"/>
</dbReference>
<dbReference type="GO" id="GO:0019344">
    <property type="term" value="P:cysteine biosynthetic process"/>
    <property type="evidence" value="ECO:0000318"/>
    <property type="project" value="GO_Central"/>
</dbReference>
<dbReference type="FunFam" id="3.40.50.1100:FF:000079">
    <property type="entry name" value="Putative pyridoxal-phosphate dependent protein F13B12.4"/>
    <property type="match status" value="1"/>
</dbReference>
<dbReference type="Gene3D" id="3.40.50.1100">
    <property type="match status" value="2"/>
</dbReference>
<dbReference type="InterPro" id="IPR050214">
    <property type="entry name" value="Cys_Synth/Cystath_Beta-Synth"/>
</dbReference>
<dbReference type="InterPro" id="IPR001926">
    <property type="entry name" value="TrpB-like_PALP"/>
</dbReference>
<dbReference type="InterPro" id="IPR036052">
    <property type="entry name" value="TrpB-like_PALP_sf"/>
</dbReference>
<dbReference type="PANTHER" id="PTHR10314">
    <property type="entry name" value="CYSTATHIONINE BETA-SYNTHASE"/>
    <property type="match status" value="1"/>
</dbReference>
<dbReference type="Pfam" id="PF00291">
    <property type="entry name" value="PALP"/>
    <property type="match status" value="1"/>
</dbReference>
<dbReference type="SUPFAM" id="SSF53686">
    <property type="entry name" value="Tryptophan synthase beta subunit-like PLP-dependent enzymes"/>
    <property type="match status" value="1"/>
</dbReference>
<reference key="1">
    <citation type="journal article" date="1998" name="Science">
        <title>Genome sequence of the nematode C. elegans: a platform for investigating biology.</title>
        <authorList>
            <consortium name="The C. elegans sequencing consortium"/>
        </authorList>
    </citation>
    <scope>NUCLEOTIDE SEQUENCE [LARGE SCALE GENOMIC DNA]</scope>
    <source>
        <strain>Bristol N2</strain>
    </source>
</reference>
<reference key="2">
    <citation type="journal article" date="2003" name="Nat. Biotechnol.">
        <title>Lectin affinity capture, isotope-coded tagging and mass spectrometry to identify N-linked glycoproteins.</title>
        <authorList>
            <person name="Kaji H."/>
            <person name="Saito H."/>
            <person name="Yamauchi Y."/>
            <person name="Shinkawa T."/>
            <person name="Taoka M."/>
            <person name="Hirabayashi J."/>
            <person name="Kasai K."/>
            <person name="Takahashi N."/>
            <person name="Isobe T."/>
        </authorList>
    </citation>
    <scope>GLYCOSYLATION [LARGE SCALE ANALYSIS] AT ASN-79</scope>
    <scope>IDENTIFICATION BY MASS SPECTROMETRY</scope>
    <source>
        <strain>Bristol N2</strain>
    </source>
</reference>
<reference key="3">
    <citation type="journal article" date="2007" name="Mol. Cell. Proteomics">
        <title>Proteomics reveals N-linked glycoprotein diversity in Caenorhabditis elegans and suggests an atypical translocation mechanism for integral membrane proteins.</title>
        <authorList>
            <person name="Kaji H."/>
            <person name="Kamiie J."/>
            <person name="Kawakami H."/>
            <person name="Kido K."/>
            <person name="Yamauchi Y."/>
            <person name="Shinkawa T."/>
            <person name="Taoka M."/>
            <person name="Takahashi N."/>
            <person name="Isobe T."/>
        </authorList>
    </citation>
    <scope>GLYCOSYLATION [LARGE SCALE ANALYSIS] AT ASN-79 AND ASN-277</scope>
    <scope>IDENTIFICATION BY MASS SPECTROMETRY</scope>
    <source>
        <strain>Bristol N2</strain>
    </source>
</reference>
<gene>
    <name type="ORF">F13B12.4</name>
</gene>
<organism>
    <name type="scientific">Caenorhabditis elegans</name>
    <dbReference type="NCBI Taxonomy" id="6239"/>
    <lineage>
        <taxon>Eukaryota</taxon>
        <taxon>Metazoa</taxon>
        <taxon>Ecdysozoa</taxon>
        <taxon>Nematoda</taxon>
        <taxon>Chromadorea</taxon>
        <taxon>Rhabditida</taxon>
        <taxon>Rhabditina</taxon>
        <taxon>Rhabditomorpha</taxon>
        <taxon>Rhabditoidea</taxon>
        <taxon>Rhabditidae</taxon>
        <taxon>Peloderinae</taxon>
        <taxon>Caenorhabditis</taxon>
    </lineage>
</organism>
<feature type="signal peptide" evidence="2">
    <location>
        <begin position="1"/>
        <end position="18"/>
    </location>
</feature>
<feature type="chain" id="PRO_0000248423" description="Putative pyridoxal-phosphate dependent protein F13B12.4">
    <location>
        <begin position="19"/>
        <end position="435"/>
    </location>
</feature>
<feature type="binding site" evidence="1">
    <location>
        <begin position="235"/>
        <end position="239"/>
    </location>
    <ligand>
        <name>pyridoxal 5'-phosphate</name>
        <dbReference type="ChEBI" id="CHEBI:597326"/>
    </ligand>
</feature>
<feature type="binding site" evidence="1">
    <location>
        <position position="342"/>
    </location>
    <ligand>
        <name>pyridoxal 5'-phosphate</name>
        <dbReference type="ChEBI" id="CHEBI:597326"/>
    </ligand>
</feature>
<feature type="modified residue" description="N6-(pyridoxal phosphate)lysine" evidence="1">
    <location>
        <position position="89"/>
    </location>
</feature>
<feature type="glycosylation site" description="N-linked (GlcNAc...) asparagine" evidence="3 4">
    <location>
        <position position="79"/>
    </location>
</feature>
<feature type="glycosylation site" description="N-linked (GlcNAc...) asparagine" evidence="4">
    <location>
        <position position="277"/>
    </location>
</feature>
<accession>Q19374</accession>
<keyword id="KW-0325">Glycoprotein</keyword>
<keyword id="KW-0663">Pyridoxal phosphate</keyword>
<keyword id="KW-1185">Reference proteome</keyword>
<keyword id="KW-0732">Signal</keyword>
<name>YSL1_CAEEL</name>
<sequence length="435" mass="48667">MKLLLLALFLSISASCLAEDITKISESRIPNEDAVPDYEAKWRLGAIQKLWNERRKMGHTPMTKFSPPGFPNADIFFKNETATATRTLKHRFAWALLLWAITEGKVTSKTSAVYDSTSGNTGSAEAYMCTLVNVPYYAVVADNLEKEKVKQIESFGGKIIKVPVALRNAKAKEFADKNHGFYMNQFGNAEKAEEFHESGDFYFESTNVYHEIIVQLKKDKEQIVKIPDYFVHSAGTGGTISSVGRYVARYGAPTKVVLSDSQYSLFYDYVIGHKFTNQSGAGIWTPPGIAGIGYGYDIEPVWYGETTSLTRNVIHEAMKMPDIASVATMRILDEKGYNVGPSTSLNFLVSLYKAYQNKARKSAIKHRLTIVTLACDPGDFYRSTYLNNEWVEKSFKKFGGVMGMECWKKLIQESIDTGSDFYSKGLTMCPGAFKV</sequence>
<evidence type="ECO:0000250" key="1"/>
<evidence type="ECO:0000255" key="2"/>
<evidence type="ECO:0000269" key="3">
    <source>
    </source>
</evidence>
<evidence type="ECO:0000269" key="4">
    <source>
    </source>
</evidence>
<evidence type="ECO:0000305" key="5"/>
<proteinExistence type="evidence at protein level"/>
<protein>
    <recommendedName>
        <fullName>Putative pyridoxal-phosphate dependent protein F13B12.4</fullName>
    </recommendedName>
</protein>